<feature type="signal peptide" evidence="1">
    <location>
        <begin position="1"/>
        <end position="16"/>
    </location>
</feature>
<feature type="chain" id="PRO_0000022585" description="Probable conjugal transfer protein TrbH">
    <location>
        <begin position="17"/>
        <end position="148"/>
    </location>
</feature>
<feature type="lipid moiety-binding region" description="N-palmitoyl cysteine" evidence="2">
    <location>
        <position position="17"/>
    </location>
</feature>
<feature type="lipid moiety-binding region" description="S-diacylglycerol cysteine" evidence="2">
    <location>
        <position position="17"/>
    </location>
</feature>
<organism>
    <name type="scientific">Sinorhizobium fredii (strain NBRC 101917 / NGR234)</name>
    <dbReference type="NCBI Taxonomy" id="394"/>
    <lineage>
        <taxon>Bacteria</taxon>
        <taxon>Pseudomonadati</taxon>
        <taxon>Pseudomonadota</taxon>
        <taxon>Alphaproteobacteria</taxon>
        <taxon>Hyphomicrobiales</taxon>
        <taxon>Rhizobiaceae</taxon>
        <taxon>Sinorhizobium/Ensifer group</taxon>
        <taxon>Sinorhizobium</taxon>
    </lineage>
</organism>
<keyword id="KW-1003">Cell membrane</keyword>
<keyword id="KW-0184">Conjugation</keyword>
<keyword id="KW-0449">Lipoprotein</keyword>
<keyword id="KW-0472">Membrane</keyword>
<keyword id="KW-0564">Palmitate</keyword>
<keyword id="KW-0614">Plasmid</keyword>
<keyword id="KW-1185">Reference proteome</keyword>
<keyword id="KW-0732">Signal</keyword>
<proteinExistence type="inferred from homology"/>
<geneLocation type="plasmid">
    <name>sym pNGR234a</name>
</geneLocation>
<accession>P55405</accession>
<name>TRBH_SINFN</name>
<protein>
    <recommendedName>
        <fullName>Probable conjugal transfer protein TrbH</fullName>
    </recommendedName>
</protein>
<dbReference type="EMBL" id="U00090">
    <property type="protein sequence ID" value="AAB92438.1"/>
    <property type="molecule type" value="Genomic_DNA"/>
</dbReference>
<dbReference type="RefSeq" id="NP_443815.1">
    <property type="nucleotide sequence ID" value="NC_000914.2"/>
</dbReference>
<dbReference type="RefSeq" id="WP_010875421.1">
    <property type="nucleotide sequence ID" value="NC_000914.2"/>
</dbReference>
<dbReference type="SMR" id="P55405"/>
<dbReference type="KEGG" id="rhi:NGR_a04110"/>
<dbReference type="PATRIC" id="fig|394.7.peg.432"/>
<dbReference type="eggNOG" id="ENOG5032WV8">
    <property type="taxonomic scope" value="Bacteria"/>
</dbReference>
<dbReference type="HOGENOM" id="CLU_1666660_0_0_5"/>
<dbReference type="OrthoDB" id="8254779at2"/>
<dbReference type="Proteomes" id="UP000001054">
    <property type="component" value="Plasmid pNGR234a"/>
</dbReference>
<dbReference type="GO" id="GO:0005886">
    <property type="term" value="C:plasma membrane"/>
    <property type="evidence" value="ECO:0007669"/>
    <property type="project" value="UniProtKB-SubCell"/>
</dbReference>
<dbReference type="NCBIfam" id="NF010409">
    <property type="entry name" value="PRK13835.1"/>
    <property type="match status" value="1"/>
</dbReference>
<dbReference type="PROSITE" id="PS51257">
    <property type="entry name" value="PROKAR_LIPOPROTEIN"/>
    <property type="match status" value="1"/>
</dbReference>
<sequence length="148" mass="15076">MRKLLISFVTVAILSGCQTAEDGLTTSSTPTTVTGPAASAIAGDMASRLAEQIGPSATMTIKIEKDSSDFASALEAALKGWGYTVVTDGKVGRVGKDVKLVELGYSIDGVDGQVLARLSTPSIALGRAYTATAAGAVPASPLSIMQRN</sequence>
<comment type="subcellular location">
    <subcellularLocation>
        <location evidence="2">Cell membrane</location>
        <topology evidence="2">Lipid-anchor</topology>
    </subcellularLocation>
</comment>
<comment type="similarity">
    <text evidence="2">To A.tumefaciens Ti plasmid TrbH.</text>
</comment>
<gene>
    <name type="primary">trbH</name>
    <name type="ordered locus">NGR_a04110</name>
    <name type="ORF">y4dF</name>
</gene>
<reference key="1">
    <citation type="journal article" date="1997" name="Nature">
        <title>Molecular basis of symbiosis between Rhizobium and legumes.</title>
        <authorList>
            <person name="Freiberg C.A."/>
            <person name="Fellay R."/>
            <person name="Bairoch A."/>
            <person name="Broughton W.J."/>
            <person name="Rosenthal A."/>
            <person name="Perret X."/>
        </authorList>
    </citation>
    <scope>NUCLEOTIDE SEQUENCE [LARGE SCALE GENOMIC DNA]</scope>
    <source>
        <strain>NBRC 101917 / NGR234</strain>
    </source>
</reference>
<reference key="2">
    <citation type="journal article" date="2009" name="Appl. Environ. Microbiol.">
        <title>Rhizobium sp. strain NGR234 possesses a remarkable number of secretion systems.</title>
        <authorList>
            <person name="Schmeisser C."/>
            <person name="Liesegang H."/>
            <person name="Krysciak D."/>
            <person name="Bakkou N."/>
            <person name="Le Quere A."/>
            <person name="Wollherr A."/>
            <person name="Heinemeyer I."/>
            <person name="Morgenstern B."/>
            <person name="Pommerening-Roeser A."/>
            <person name="Flores M."/>
            <person name="Palacios R."/>
            <person name="Brenner S."/>
            <person name="Gottschalk G."/>
            <person name="Schmitz R.A."/>
            <person name="Broughton W.J."/>
            <person name="Perret X."/>
            <person name="Strittmatter A.W."/>
            <person name="Streit W.R."/>
        </authorList>
    </citation>
    <scope>NUCLEOTIDE SEQUENCE [LARGE SCALE GENOMIC DNA]</scope>
    <source>
        <strain>NBRC 101917 / NGR234</strain>
    </source>
</reference>
<evidence type="ECO:0000255" key="1">
    <source>
        <dbReference type="PROSITE-ProRule" id="PRU00303"/>
    </source>
</evidence>
<evidence type="ECO:0000305" key="2"/>